<evidence type="ECO:0000305" key="1"/>
<keyword id="KW-1185">Reference proteome</keyword>
<sequence length="131" mass="15286">MARKVIDVRIVNAATAEQESFIKELSMELIHDVFPLYFSELDIQRFKKKGVLSLNNHYYQGTLKEAFQIMACLQMIHIILTKPSPHSDLSDQAIFEKNSKMLNDFGIYFPFAFSDFQKKTNKAFFGQRRLI</sequence>
<dbReference type="EMBL" id="X96983">
    <property type="protein sequence ID" value="CAA65705.1"/>
    <property type="molecule type" value="Genomic_DNA"/>
</dbReference>
<dbReference type="EMBL" id="AL009126">
    <property type="protein sequence ID" value="CAB12750.2"/>
    <property type="molecule type" value="Genomic_DNA"/>
</dbReference>
<dbReference type="PIR" id="A69824">
    <property type="entry name" value="A69824"/>
</dbReference>
<dbReference type="RefSeq" id="NP_388803.2">
    <property type="nucleotide sequence ID" value="NC_000964.3"/>
</dbReference>
<dbReference type="RefSeq" id="WP_003233401.1">
    <property type="nucleotide sequence ID" value="NZ_OZ025638.1"/>
</dbReference>
<dbReference type="FunCoup" id="P54605">
    <property type="interactions" value="84"/>
</dbReference>
<dbReference type="STRING" id="224308.BSU09220"/>
<dbReference type="PaxDb" id="224308-BSU09220"/>
<dbReference type="EnsemblBacteria" id="CAB12750">
    <property type="protein sequence ID" value="CAB12750"/>
    <property type="gene ID" value="BSU_09220"/>
</dbReference>
<dbReference type="GeneID" id="936261"/>
<dbReference type="KEGG" id="bsu:BSU09220"/>
<dbReference type="PATRIC" id="fig|224308.179.peg.994"/>
<dbReference type="eggNOG" id="ENOG5030CCF">
    <property type="taxonomic scope" value="Bacteria"/>
</dbReference>
<dbReference type="InParanoid" id="P54605"/>
<dbReference type="OrthoDB" id="2966549at2"/>
<dbReference type="BioCyc" id="BSUB:BSU09220-MONOMER"/>
<dbReference type="Proteomes" id="UP000001570">
    <property type="component" value="Chromosome"/>
</dbReference>
<dbReference type="InterPro" id="IPR020355">
    <property type="entry name" value="Uncharacterised_YhcU"/>
</dbReference>
<dbReference type="Pfam" id="PF17326">
    <property type="entry name" value="DUF5365"/>
    <property type="match status" value="1"/>
</dbReference>
<proteinExistence type="predicted"/>
<accession>P54605</accession>
<reference key="1">
    <citation type="journal article" date="1996" name="Microbiology">
        <title>A 22 kb DNA sequence in the cspB-glpPFKD region at 75 degrees on the Bacillus subtilis chromosome.</title>
        <authorList>
            <person name="Noback M.A."/>
            <person name="Terpstra P."/>
            <person name="Holsappel S."/>
            <person name="Venema G."/>
            <person name="Bron S."/>
        </authorList>
    </citation>
    <scope>NUCLEOTIDE SEQUENCE [GENOMIC DNA]</scope>
    <source>
        <strain>168</strain>
    </source>
</reference>
<reference key="2">
    <citation type="journal article" date="1997" name="Nature">
        <title>The complete genome sequence of the Gram-positive bacterium Bacillus subtilis.</title>
        <authorList>
            <person name="Kunst F."/>
            <person name="Ogasawara N."/>
            <person name="Moszer I."/>
            <person name="Albertini A.M."/>
            <person name="Alloni G."/>
            <person name="Azevedo V."/>
            <person name="Bertero M.G."/>
            <person name="Bessieres P."/>
            <person name="Bolotin A."/>
            <person name="Borchert S."/>
            <person name="Borriss R."/>
            <person name="Boursier L."/>
            <person name="Brans A."/>
            <person name="Braun M."/>
            <person name="Brignell S.C."/>
            <person name="Bron S."/>
            <person name="Brouillet S."/>
            <person name="Bruschi C.V."/>
            <person name="Caldwell B."/>
            <person name="Capuano V."/>
            <person name="Carter N.M."/>
            <person name="Choi S.-K."/>
            <person name="Codani J.-J."/>
            <person name="Connerton I.F."/>
            <person name="Cummings N.J."/>
            <person name="Daniel R.A."/>
            <person name="Denizot F."/>
            <person name="Devine K.M."/>
            <person name="Duesterhoeft A."/>
            <person name="Ehrlich S.D."/>
            <person name="Emmerson P.T."/>
            <person name="Entian K.-D."/>
            <person name="Errington J."/>
            <person name="Fabret C."/>
            <person name="Ferrari E."/>
            <person name="Foulger D."/>
            <person name="Fritz C."/>
            <person name="Fujita M."/>
            <person name="Fujita Y."/>
            <person name="Fuma S."/>
            <person name="Galizzi A."/>
            <person name="Galleron N."/>
            <person name="Ghim S.-Y."/>
            <person name="Glaser P."/>
            <person name="Goffeau A."/>
            <person name="Golightly E.J."/>
            <person name="Grandi G."/>
            <person name="Guiseppi G."/>
            <person name="Guy B.J."/>
            <person name="Haga K."/>
            <person name="Haiech J."/>
            <person name="Harwood C.R."/>
            <person name="Henaut A."/>
            <person name="Hilbert H."/>
            <person name="Holsappel S."/>
            <person name="Hosono S."/>
            <person name="Hullo M.-F."/>
            <person name="Itaya M."/>
            <person name="Jones L.-M."/>
            <person name="Joris B."/>
            <person name="Karamata D."/>
            <person name="Kasahara Y."/>
            <person name="Klaerr-Blanchard M."/>
            <person name="Klein C."/>
            <person name="Kobayashi Y."/>
            <person name="Koetter P."/>
            <person name="Koningstein G."/>
            <person name="Krogh S."/>
            <person name="Kumano M."/>
            <person name="Kurita K."/>
            <person name="Lapidus A."/>
            <person name="Lardinois S."/>
            <person name="Lauber J."/>
            <person name="Lazarevic V."/>
            <person name="Lee S.-M."/>
            <person name="Levine A."/>
            <person name="Liu H."/>
            <person name="Masuda S."/>
            <person name="Mauel C."/>
            <person name="Medigue C."/>
            <person name="Medina N."/>
            <person name="Mellado R.P."/>
            <person name="Mizuno M."/>
            <person name="Moestl D."/>
            <person name="Nakai S."/>
            <person name="Noback M."/>
            <person name="Noone D."/>
            <person name="O'Reilly M."/>
            <person name="Ogawa K."/>
            <person name="Ogiwara A."/>
            <person name="Oudega B."/>
            <person name="Park S.-H."/>
            <person name="Parro V."/>
            <person name="Pohl T.M."/>
            <person name="Portetelle D."/>
            <person name="Porwollik S."/>
            <person name="Prescott A.M."/>
            <person name="Presecan E."/>
            <person name="Pujic P."/>
            <person name="Purnelle B."/>
            <person name="Rapoport G."/>
            <person name="Rey M."/>
            <person name="Reynolds S."/>
            <person name="Rieger M."/>
            <person name="Rivolta C."/>
            <person name="Rocha E."/>
            <person name="Roche B."/>
            <person name="Rose M."/>
            <person name="Sadaie Y."/>
            <person name="Sato T."/>
            <person name="Scanlan E."/>
            <person name="Schleich S."/>
            <person name="Schroeter R."/>
            <person name="Scoffone F."/>
            <person name="Sekiguchi J."/>
            <person name="Sekowska A."/>
            <person name="Seror S.J."/>
            <person name="Serror P."/>
            <person name="Shin B.-S."/>
            <person name="Soldo B."/>
            <person name="Sorokin A."/>
            <person name="Tacconi E."/>
            <person name="Takagi T."/>
            <person name="Takahashi H."/>
            <person name="Takemaru K."/>
            <person name="Takeuchi M."/>
            <person name="Tamakoshi A."/>
            <person name="Tanaka T."/>
            <person name="Terpstra P."/>
            <person name="Tognoni A."/>
            <person name="Tosato V."/>
            <person name="Uchiyama S."/>
            <person name="Vandenbol M."/>
            <person name="Vannier F."/>
            <person name="Vassarotti A."/>
            <person name="Viari A."/>
            <person name="Wambutt R."/>
            <person name="Wedler E."/>
            <person name="Wedler H."/>
            <person name="Weitzenegger T."/>
            <person name="Winters P."/>
            <person name="Wipat A."/>
            <person name="Yamamoto H."/>
            <person name="Yamane K."/>
            <person name="Yasumoto K."/>
            <person name="Yata K."/>
            <person name="Yoshida K."/>
            <person name="Yoshikawa H.-F."/>
            <person name="Zumstein E."/>
            <person name="Yoshikawa H."/>
            <person name="Danchin A."/>
        </authorList>
    </citation>
    <scope>NUCLEOTIDE SEQUENCE [LARGE SCALE GENOMIC DNA]</scope>
    <source>
        <strain>168</strain>
    </source>
</reference>
<reference key="3">
    <citation type="journal article" date="2009" name="Microbiology">
        <title>From a consortium sequence to a unified sequence: the Bacillus subtilis 168 reference genome a decade later.</title>
        <authorList>
            <person name="Barbe V."/>
            <person name="Cruveiller S."/>
            <person name="Kunst F."/>
            <person name="Lenoble P."/>
            <person name="Meurice G."/>
            <person name="Sekowska A."/>
            <person name="Vallenet D."/>
            <person name="Wang T."/>
            <person name="Moszer I."/>
            <person name="Medigue C."/>
            <person name="Danchin A."/>
        </authorList>
    </citation>
    <scope>SEQUENCE REVISION TO 46</scope>
</reference>
<organism>
    <name type="scientific">Bacillus subtilis (strain 168)</name>
    <dbReference type="NCBI Taxonomy" id="224308"/>
    <lineage>
        <taxon>Bacteria</taxon>
        <taxon>Bacillati</taxon>
        <taxon>Bacillota</taxon>
        <taxon>Bacilli</taxon>
        <taxon>Bacillales</taxon>
        <taxon>Bacillaceae</taxon>
        <taxon>Bacillus</taxon>
    </lineage>
</organism>
<protein>
    <recommendedName>
        <fullName>Uncharacterized protein YhcU</fullName>
    </recommendedName>
</protein>
<feature type="chain" id="PRO_0000049567" description="Uncharacterized protein YhcU">
    <location>
        <begin position="1"/>
        <end position="131"/>
    </location>
</feature>
<feature type="sequence conflict" description="In Ref. 1; CAA65705." evidence="1" ref="1">
    <original>F</original>
    <variation>L</variation>
    <location>
        <position position="46"/>
    </location>
</feature>
<gene>
    <name type="primary">yhcU</name>
    <name type="ordered locus">BSU09220</name>
</gene>
<name>YHCU_BACSU</name>